<reference key="1">
    <citation type="journal article" date="1992" name="Plant Physiol.">
        <title>cDNA cloning of poplar bark storage protein and control of its expression by photoperiod.</title>
        <authorList>
            <person name="Coleman G.D."/>
            <person name="Chen T.H.H."/>
            <person name="Fuchigami L."/>
        </authorList>
    </citation>
    <scope>NUCLEOTIDE SEQUENCE [MRNA]</scope>
    <scope>PROTEIN SEQUENCE OF 25-43</scope>
    <source>
        <tissue>Bark</tissue>
    </source>
</reference>
<proteinExistence type="evidence at protein level"/>
<dbReference type="EMBL" id="M77504">
    <property type="protein sequence ID" value="AAA50504.1"/>
    <property type="molecule type" value="mRNA"/>
</dbReference>
<dbReference type="SMR" id="Q09117"/>
<dbReference type="GlyCosmos" id="Q09117">
    <property type="glycosylation" value="1 site, No reported glycans"/>
</dbReference>
<dbReference type="GO" id="GO:0003824">
    <property type="term" value="F:catalytic activity"/>
    <property type="evidence" value="ECO:0007669"/>
    <property type="project" value="InterPro"/>
</dbReference>
<dbReference type="GO" id="GO:0045735">
    <property type="term" value="F:nutrient reservoir activity"/>
    <property type="evidence" value="ECO:0007669"/>
    <property type="project" value="UniProtKB-KW"/>
</dbReference>
<dbReference type="GO" id="GO:0009116">
    <property type="term" value="P:nucleoside metabolic process"/>
    <property type="evidence" value="ECO:0007669"/>
    <property type="project" value="InterPro"/>
</dbReference>
<dbReference type="Gene3D" id="3.40.50.1580">
    <property type="entry name" value="Nucleoside phosphorylase domain"/>
    <property type="match status" value="1"/>
</dbReference>
<dbReference type="InterPro" id="IPR000845">
    <property type="entry name" value="Nucleoside_phosphorylase_d"/>
</dbReference>
<dbReference type="InterPro" id="IPR035994">
    <property type="entry name" value="Nucleoside_phosphorylase_sf"/>
</dbReference>
<dbReference type="PANTHER" id="PTHR21234:SF45">
    <property type="entry name" value="NUCLEOSIDE PHOSPHORYLASE DOMAIN-CONTAINING PROTEIN"/>
    <property type="match status" value="1"/>
</dbReference>
<dbReference type="PANTHER" id="PTHR21234">
    <property type="entry name" value="PURINE NUCLEOSIDE PHOSPHORYLASE"/>
    <property type="match status" value="1"/>
</dbReference>
<dbReference type="Pfam" id="PF01048">
    <property type="entry name" value="PNP_UDP_1"/>
    <property type="match status" value="1"/>
</dbReference>
<dbReference type="SUPFAM" id="SSF53167">
    <property type="entry name" value="Purine and uridine phosphorylases"/>
    <property type="match status" value="1"/>
</dbReference>
<evidence type="ECO:0000255" key="1"/>
<evidence type="ECO:0000269" key="2">
    <source>
    </source>
</evidence>
<evidence type="ECO:0000305" key="3"/>
<protein>
    <recommendedName>
        <fullName>Bark storage protein B</fullName>
    </recommendedName>
</protein>
<gene>
    <name type="primary">BSP</name>
</gene>
<keyword id="KW-0903">Direct protein sequencing</keyword>
<keyword id="KW-0325">Glycoprotein</keyword>
<keyword id="KW-0732">Signal</keyword>
<keyword id="KW-0758">Storage protein</keyword>
<organism>
    <name type="scientific">Populus deltoides</name>
    <name type="common">Eastern poplar</name>
    <name type="synonym">Eastern cottonwood</name>
    <dbReference type="NCBI Taxonomy" id="3696"/>
    <lineage>
        <taxon>Eukaryota</taxon>
        <taxon>Viridiplantae</taxon>
        <taxon>Streptophyta</taxon>
        <taxon>Embryophyta</taxon>
        <taxon>Tracheophyta</taxon>
        <taxon>Spermatophyta</taxon>
        <taxon>Magnoliopsida</taxon>
        <taxon>eudicotyledons</taxon>
        <taxon>Gunneridae</taxon>
        <taxon>Pentapetalae</taxon>
        <taxon>rosids</taxon>
        <taxon>fabids</taxon>
        <taxon>Malpighiales</taxon>
        <taxon>Salicaceae</taxon>
        <taxon>Saliceae</taxon>
        <taxon>Populus</taxon>
    </lineage>
</organism>
<feature type="signal peptide" evidence="2">
    <location>
        <begin position="1"/>
        <end position="24"/>
    </location>
</feature>
<feature type="chain" id="PRO_0000020834" description="Bark storage protein B">
    <location>
        <begin position="25"/>
        <end position="312"/>
    </location>
</feature>
<feature type="glycosylation site" description="N-linked (GlcNAc...) asparagine" evidence="1">
    <location>
        <position position="70"/>
    </location>
</feature>
<accession>Q09117</accession>
<comment type="function">
    <text>May play a role in nitrogen storage.</text>
</comment>
<comment type="subunit">
    <text>Monomer.</text>
</comment>
<comment type="tissue specificity">
    <text>Bark tissue.</text>
</comment>
<comment type="induction">
    <text>By photoperiod. Short days stimulate accumulation, while long days inhibit.</text>
</comment>
<comment type="similarity">
    <text evidence="3">To wound-inducible poplar endochitinases.</text>
</comment>
<name>BSPB_POPDE</name>
<sequence>MPQQSMQASLRDPIAEIERSNCKIAHLRLGLVFTSDNNERALQDSGLYSPDSEDSSVDIAGRRFHSGTLNGSSIVYVKTGSHSVNMATTLQILLARFSIHGVIYFGNAGSLDKKTMVPGDVSVPQAVAFTGVCNWKKFRSEKGKLVFGDFNYPENGENLLGTVEYEKIKMFSPSEAPKEVFWLPITKSWYNAATEALKDMKLRKCYSDECLPGEPKVVFGSKSSTSDFYVRNKAYGDFLNDNFDAKTADTTSASVALTSLSNEKLFVVFQGVSNVAGETSSNSRVSYLASYNAFLAATKFINSIPTPRLACE</sequence>